<name>PHP3_CAEEL</name>
<feature type="chain" id="PRO_0000453032" description="Homeobox protein php-3">
    <location>
        <begin position="1"/>
        <end position="275"/>
    </location>
</feature>
<feature type="DNA-binding region" description="Homeobox" evidence="1">
    <location>
        <begin position="199"/>
        <end position="258"/>
    </location>
</feature>
<feature type="region of interest" description="Disordered" evidence="3">
    <location>
        <begin position="1"/>
        <end position="53"/>
    </location>
</feature>
<feature type="region of interest" description="Disordered" evidence="3">
    <location>
        <begin position="70"/>
        <end position="116"/>
    </location>
</feature>
<feature type="region of interest" description="Disordered" evidence="3">
    <location>
        <begin position="250"/>
        <end position="275"/>
    </location>
</feature>
<feature type="compositionally biased region" description="Basic and acidic residues" evidence="3">
    <location>
        <begin position="22"/>
        <end position="31"/>
    </location>
</feature>
<feature type="compositionally biased region" description="Low complexity" evidence="3">
    <location>
        <begin position="44"/>
        <end position="53"/>
    </location>
</feature>
<feature type="compositionally biased region" description="Low complexity" evidence="3">
    <location>
        <begin position="70"/>
        <end position="89"/>
    </location>
</feature>
<feature type="compositionally biased region" description="Basic residues" evidence="3">
    <location>
        <begin position="250"/>
        <end position="259"/>
    </location>
</feature>
<gene>
    <name evidence="10" type="primary">php-3</name>
    <name evidence="10" type="ORF">Y75B8A.1</name>
</gene>
<organism evidence="9">
    <name type="scientific">Caenorhabditis elegans</name>
    <dbReference type="NCBI Taxonomy" id="6239"/>
    <lineage>
        <taxon>Eukaryota</taxon>
        <taxon>Metazoa</taxon>
        <taxon>Ecdysozoa</taxon>
        <taxon>Nematoda</taxon>
        <taxon>Chromadorea</taxon>
        <taxon>Rhabditida</taxon>
        <taxon>Rhabditina</taxon>
        <taxon>Rhabditomorpha</taxon>
        <taxon>Rhabditoidea</taxon>
        <taxon>Rhabditidae</taxon>
        <taxon>Peloderinae</taxon>
        <taxon>Caenorhabditis</taxon>
    </lineage>
</organism>
<proteinExistence type="evidence at transcript level"/>
<evidence type="ECO:0000255" key="1">
    <source>
        <dbReference type="PROSITE-ProRule" id="PRU00108"/>
    </source>
</evidence>
<evidence type="ECO:0000255" key="2">
    <source>
        <dbReference type="RuleBase" id="RU000682"/>
    </source>
</evidence>
<evidence type="ECO:0000256" key="3">
    <source>
        <dbReference type="SAM" id="MobiDB-lite"/>
    </source>
</evidence>
<evidence type="ECO:0000269" key="4">
    <source>
    </source>
</evidence>
<evidence type="ECO:0000269" key="5">
    <source>
    </source>
</evidence>
<evidence type="ECO:0000303" key="6">
    <source>
    </source>
</evidence>
<evidence type="ECO:0000305" key="7"/>
<evidence type="ECO:0000312" key="8">
    <source>
        <dbReference type="EMBL" id="AAD48876.1"/>
    </source>
</evidence>
<evidence type="ECO:0000312" key="9">
    <source>
        <dbReference type="Proteomes" id="UP000001940"/>
    </source>
</evidence>
<evidence type="ECO:0000312" key="10">
    <source>
        <dbReference type="WormBase" id="Y75B8A.1"/>
    </source>
</evidence>
<protein>
    <recommendedName>
        <fullName evidence="7">Homeobox protein php-3</fullName>
    </recommendedName>
    <alternativeName>
        <fullName evidence="6">Posterior Hox protein paralog 3</fullName>
    </alternativeName>
</protein>
<comment type="function">
    <text evidence="4 5">Probable transcription factor, involved in posterior embryonic patterning, morphogenetic movements of the posterior hypodermis, and cell fate specification (PubMed:10781051, PubMed:21408209). May regulate expression of transcription factor dmd-3 (PubMed:21408209).</text>
</comment>
<comment type="subcellular location">
    <subcellularLocation>
        <location evidence="2">Nucleus</location>
    </subcellularLocation>
</comment>
<comment type="disruption phenotype">
    <text evidence="4 5">RNAi-mediated knockdown in adults has no effect on their F1 progeny, but increases the frequency of posterior morphological abnormalities on a homeobox nob-1 mutant background (PubMed:10781051). However, RNAi-mediated knockdown in L1 larvae causes defects in tail tip morphogenesis, which are exacerbated on a nob-1 mutant background (PubMed:21408209).</text>
</comment>
<comment type="similarity">
    <text evidence="7">Belongs to the abd-b homeobox family.</text>
</comment>
<dbReference type="EMBL" id="AF172092">
    <property type="protein sequence ID" value="AAD48876.1"/>
    <property type="molecule type" value="mRNA"/>
</dbReference>
<dbReference type="EMBL" id="BX284603">
    <property type="protein sequence ID" value="CAA22081.2"/>
    <property type="molecule type" value="Genomic_DNA"/>
</dbReference>
<dbReference type="PIR" id="T27381">
    <property type="entry name" value="T27381"/>
</dbReference>
<dbReference type="RefSeq" id="NP_499573.1">
    <property type="nucleotide sequence ID" value="NM_067172.7"/>
</dbReference>
<dbReference type="SMR" id="Q9XW88"/>
<dbReference type="DIP" id="DIP-26245N"/>
<dbReference type="FunCoup" id="Q9XW88">
    <property type="interactions" value="109"/>
</dbReference>
<dbReference type="IntAct" id="Q9XW88">
    <property type="interactions" value="21"/>
</dbReference>
<dbReference type="STRING" id="6239.Y75B8A.1.1"/>
<dbReference type="PaxDb" id="6239-Y75B8A.1"/>
<dbReference type="EnsemblMetazoa" id="Y75B8A.1.1">
    <property type="protein sequence ID" value="Y75B8A.1.1"/>
    <property type="gene ID" value="WBGene00004024"/>
</dbReference>
<dbReference type="GeneID" id="176640"/>
<dbReference type="KEGG" id="cel:CELE_Y75B8A.1"/>
<dbReference type="UCSC" id="Y75B8A.1">
    <property type="organism name" value="c. elegans"/>
</dbReference>
<dbReference type="AGR" id="WB:WBGene00004024"/>
<dbReference type="CTD" id="176640"/>
<dbReference type="WormBase" id="Y75B8A.1">
    <property type="protein sequence ID" value="CE28148"/>
    <property type="gene ID" value="WBGene00004024"/>
    <property type="gene designation" value="php-3"/>
</dbReference>
<dbReference type="eggNOG" id="KOG0487">
    <property type="taxonomic scope" value="Eukaryota"/>
</dbReference>
<dbReference type="GeneTree" id="ENSGT00940000168206"/>
<dbReference type="HOGENOM" id="CLU_1190784_0_0_1"/>
<dbReference type="InParanoid" id="Q9XW88"/>
<dbReference type="OMA" id="RWELAKY"/>
<dbReference type="OrthoDB" id="6159439at2759"/>
<dbReference type="SignaLink" id="Q9XW88"/>
<dbReference type="PRO" id="PR:Q9XW88"/>
<dbReference type="Proteomes" id="UP000001940">
    <property type="component" value="Chromosome III"/>
</dbReference>
<dbReference type="Bgee" id="WBGene00004024">
    <property type="expression patterns" value="Expressed in larva and 3 other cell types or tissues"/>
</dbReference>
<dbReference type="GO" id="GO:0005634">
    <property type="term" value="C:nucleus"/>
    <property type="evidence" value="ECO:0000318"/>
    <property type="project" value="GO_Central"/>
</dbReference>
<dbReference type="GO" id="GO:0000981">
    <property type="term" value="F:DNA-binding transcription factor activity, RNA polymerase II-specific"/>
    <property type="evidence" value="ECO:0000318"/>
    <property type="project" value="GO_Central"/>
</dbReference>
<dbReference type="GO" id="GO:0000978">
    <property type="term" value="F:RNA polymerase II cis-regulatory region sequence-specific DNA binding"/>
    <property type="evidence" value="ECO:0000318"/>
    <property type="project" value="GO_Central"/>
</dbReference>
<dbReference type="GO" id="GO:0110039">
    <property type="term" value="P:positive regulation of nematode male tail tip morphogenesis"/>
    <property type="evidence" value="ECO:0000315"/>
    <property type="project" value="UniProtKB"/>
</dbReference>
<dbReference type="GO" id="GO:0006357">
    <property type="term" value="P:regulation of transcription by RNA polymerase II"/>
    <property type="evidence" value="ECO:0000318"/>
    <property type="project" value="GO_Central"/>
</dbReference>
<dbReference type="CDD" id="cd00086">
    <property type="entry name" value="homeodomain"/>
    <property type="match status" value="1"/>
</dbReference>
<dbReference type="Gene3D" id="1.10.10.60">
    <property type="entry name" value="Homeodomain-like"/>
    <property type="match status" value="1"/>
</dbReference>
<dbReference type="InterPro" id="IPR001356">
    <property type="entry name" value="HD"/>
</dbReference>
<dbReference type="InterPro" id="IPR020479">
    <property type="entry name" value="HD_metazoa"/>
</dbReference>
<dbReference type="InterPro" id="IPR017970">
    <property type="entry name" value="Homeobox_CS"/>
</dbReference>
<dbReference type="InterPro" id="IPR009057">
    <property type="entry name" value="Homeodomain-like_sf"/>
</dbReference>
<dbReference type="InterPro" id="IPR046333">
    <property type="entry name" value="HXA10/ABDB-like"/>
</dbReference>
<dbReference type="PANTHER" id="PTHR45874">
    <property type="entry name" value="HOMEOBOX PROTEIN ABDOMINAL-B"/>
    <property type="match status" value="1"/>
</dbReference>
<dbReference type="PANTHER" id="PTHR45874:SF4">
    <property type="entry name" value="HOMEOBOX PROTEIN ABDOMINAL-B"/>
    <property type="match status" value="1"/>
</dbReference>
<dbReference type="Pfam" id="PF00046">
    <property type="entry name" value="Homeodomain"/>
    <property type="match status" value="1"/>
</dbReference>
<dbReference type="PRINTS" id="PR00024">
    <property type="entry name" value="HOMEOBOX"/>
</dbReference>
<dbReference type="SMART" id="SM00389">
    <property type="entry name" value="HOX"/>
    <property type="match status" value="1"/>
</dbReference>
<dbReference type="SUPFAM" id="SSF46689">
    <property type="entry name" value="Homeodomain-like"/>
    <property type="match status" value="1"/>
</dbReference>
<dbReference type="PROSITE" id="PS00027">
    <property type="entry name" value="HOMEOBOX_1"/>
    <property type="match status" value="1"/>
</dbReference>
<dbReference type="PROSITE" id="PS50071">
    <property type="entry name" value="HOMEOBOX_2"/>
    <property type="match status" value="1"/>
</dbReference>
<sequence>MISVMQQMMNNSNMPPPFVKSSDSHETHDESPTSPFIKRSDSPATTSSAAAAAMQHNFWSTRAAQLQQSVSGSSGVSSGSSSSASNNLSRTQADNHSERGSDTASSPQVAPLPTSSGMSMPAAAAAGMYPFNAGRFPTEFNMMVNQSMYNDFYSNSLAASSWPYSYPQQYPFANYSMPSLDGNLNDGGQLEWTSSSHAMRKKRKPYTKAQTLELEKEFLYNTYVSKQKRWELAKYLHLTERQVKIWFQNRRMKDKKQKQRTSGDPTGMLMPPGLD</sequence>
<accession>Q9XW88</accession>
<accession>Q9U9C3</accession>
<keyword id="KW-0238">DNA-binding</keyword>
<keyword id="KW-0371">Homeobox</keyword>
<keyword id="KW-0539">Nucleus</keyword>
<keyword id="KW-1185">Reference proteome</keyword>
<keyword id="KW-0804">Transcription</keyword>
<keyword id="KW-0805">Transcription regulation</keyword>
<reference evidence="8" key="1">
    <citation type="journal article" date="2000" name="Proc. Natl. Acad. Sci. U.S.A.">
        <title>Caenorhabditis elegans embryonic axial patterning requires two recently discovered posterior-group Hox genes.</title>
        <authorList>
            <person name="Van Auken K."/>
            <person name="Weaver D.C."/>
            <person name="Edgar L.G."/>
            <person name="Wood W.B."/>
        </authorList>
    </citation>
    <scope>NUCLEOTIDE SEQUENCE [MRNA]</scope>
    <scope>FUNCTION</scope>
    <scope>DISRUPTION PHENOTYPE</scope>
    <source>
        <strain evidence="8">Bristol N2</strain>
    </source>
</reference>
<reference evidence="9" key="2">
    <citation type="journal article" date="1998" name="Science">
        <title>Genome sequence of the nematode C. elegans: a platform for investigating biology.</title>
        <authorList>
            <consortium name="The C. elegans sequencing consortium"/>
        </authorList>
    </citation>
    <scope>NUCLEOTIDE SEQUENCE [LARGE SCALE GENOMIC DNA]</scope>
    <source>
        <strain evidence="9">Bristol N2</strain>
    </source>
</reference>
<reference evidence="7" key="3">
    <citation type="journal article" date="2011" name="PLoS Genet.">
        <title>A bow-tie genetic architecture for morphogenesis suggested by a genome-wide RNAi screen in Caenorhabditis elegans.</title>
        <authorList>
            <person name="Nelson M.D."/>
            <person name="Zhou E."/>
            <person name="Kiontke K."/>
            <person name="Fradin H."/>
            <person name="Maldonado G."/>
            <person name="Martin D."/>
            <person name="Shah K."/>
            <person name="Fitch D.H."/>
        </authorList>
    </citation>
    <scope>FUNCTION</scope>
    <scope>DISRUPTION PHENOTYPE</scope>
</reference>